<dbReference type="EC" id="1.1.1.34"/>
<dbReference type="EMBL" id="L10390">
    <property type="protein sequence ID" value="AAA33040.1"/>
    <property type="molecule type" value="Genomic_DNA"/>
</dbReference>
<dbReference type="SMR" id="P48021"/>
<dbReference type="UniPathway" id="UPA00058">
    <property type="reaction ID" value="UER00103"/>
</dbReference>
<dbReference type="GO" id="GO:0005789">
    <property type="term" value="C:endoplasmic reticulum membrane"/>
    <property type="evidence" value="ECO:0007669"/>
    <property type="project" value="UniProtKB-SubCell"/>
</dbReference>
<dbReference type="GO" id="GO:0005778">
    <property type="term" value="C:peroxisomal membrane"/>
    <property type="evidence" value="ECO:0007669"/>
    <property type="project" value="TreeGrafter"/>
</dbReference>
<dbReference type="GO" id="GO:0004420">
    <property type="term" value="F:hydroxymethylglutaryl-CoA reductase (NADPH) activity"/>
    <property type="evidence" value="ECO:0007669"/>
    <property type="project" value="UniProtKB-EC"/>
</dbReference>
<dbReference type="GO" id="GO:0015936">
    <property type="term" value="P:coenzyme A metabolic process"/>
    <property type="evidence" value="ECO:0007669"/>
    <property type="project" value="InterPro"/>
</dbReference>
<dbReference type="GO" id="GO:0008299">
    <property type="term" value="P:isoprenoid biosynthetic process"/>
    <property type="evidence" value="ECO:0007669"/>
    <property type="project" value="UniProtKB-KW"/>
</dbReference>
<dbReference type="GO" id="GO:0016126">
    <property type="term" value="P:sterol biosynthetic process"/>
    <property type="evidence" value="ECO:0007669"/>
    <property type="project" value="TreeGrafter"/>
</dbReference>
<dbReference type="CDD" id="cd00643">
    <property type="entry name" value="HMG-CoA_reductase_classI"/>
    <property type="match status" value="1"/>
</dbReference>
<dbReference type="FunFam" id="1.10.3270.10:FF:000002">
    <property type="entry name" value="3-hydroxy-3-methylglutaryl coenzyme A reductase"/>
    <property type="match status" value="1"/>
</dbReference>
<dbReference type="FunFam" id="3.30.70.420:FF:000001">
    <property type="entry name" value="3-hydroxy-3-methylglutaryl coenzyme A reductase"/>
    <property type="match status" value="1"/>
</dbReference>
<dbReference type="FunFam" id="3.90.770.10:FF:000001">
    <property type="entry name" value="3-hydroxy-3-methylglutaryl coenzyme A reductase"/>
    <property type="match status" value="1"/>
</dbReference>
<dbReference type="Gene3D" id="3.90.770.10">
    <property type="entry name" value="3-hydroxy-3-methylglutaryl-coenzyme A Reductase, Chain A, domain 2"/>
    <property type="match status" value="1"/>
</dbReference>
<dbReference type="Gene3D" id="1.10.3270.10">
    <property type="entry name" value="HMGR, N-terminal domain"/>
    <property type="match status" value="1"/>
</dbReference>
<dbReference type="Gene3D" id="3.30.70.420">
    <property type="entry name" value="Hydroxymethylglutaryl-CoA reductase, class I/II, NAD/NADP-binding domain"/>
    <property type="match status" value="1"/>
</dbReference>
<dbReference type="InterPro" id="IPR002202">
    <property type="entry name" value="HMG_CoA_Rdtase"/>
</dbReference>
<dbReference type="InterPro" id="IPR023074">
    <property type="entry name" value="HMG_CoA_Rdtase_cat_sf"/>
</dbReference>
<dbReference type="InterPro" id="IPR023076">
    <property type="entry name" value="HMG_CoA_Rdtase_CS"/>
</dbReference>
<dbReference type="InterPro" id="IPR004554">
    <property type="entry name" value="HMG_CoA_Rdtase_eu_arc"/>
</dbReference>
<dbReference type="InterPro" id="IPR023282">
    <property type="entry name" value="HMG_CoA_Rdtase_N"/>
</dbReference>
<dbReference type="InterPro" id="IPR009023">
    <property type="entry name" value="HMG_CoA_Rdtase_NAD(P)-bd_sf"/>
</dbReference>
<dbReference type="InterPro" id="IPR009029">
    <property type="entry name" value="HMG_CoA_Rdtase_sub-bd_dom_sf"/>
</dbReference>
<dbReference type="NCBIfam" id="TIGR00533">
    <property type="entry name" value="HMG_CoA_R_NADP"/>
    <property type="match status" value="1"/>
</dbReference>
<dbReference type="PANTHER" id="PTHR10572">
    <property type="entry name" value="3-HYDROXY-3-METHYLGLUTARYL-COENZYME A REDUCTASE"/>
    <property type="match status" value="1"/>
</dbReference>
<dbReference type="PANTHER" id="PTHR10572:SF24">
    <property type="entry name" value="3-HYDROXY-3-METHYLGLUTARYL-COENZYME A REDUCTASE"/>
    <property type="match status" value="1"/>
</dbReference>
<dbReference type="Pfam" id="PF00368">
    <property type="entry name" value="HMG-CoA_red"/>
    <property type="match status" value="1"/>
</dbReference>
<dbReference type="PRINTS" id="PR00071">
    <property type="entry name" value="HMGCOARDTASE"/>
</dbReference>
<dbReference type="SUPFAM" id="SSF55035">
    <property type="entry name" value="NAD-binding domain of HMG-CoA reductase"/>
    <property type="match status" value="1"/>
</dbReference>
<dbReference type="SUPFAM" id="SSF56542">
    <property type="entry name" value="Substrate-binding domain of HMG-CoA reductase"/>
    <property type="match status" value="1"/>
</dbReference>
<dbReference type="PROSITE" id="PS00066">
    <property type="entry name" value="HMG_COA_REDUCTASE_1"/>
    <property type="match status" value="1"/>
</dbReference>
<dbReference type="PROSITE" id="PS00318">
    <property type="entry name" value="HMG_COA_REDUCTASE_2"/>
    <property type="match status" value="1"/>
</dbReference>
<dbReference type="PROSITE" id="PS01192">
    <property type="entry name" value="HMG_COA_REDUCTASE_3"/>
    <property type="match status" value="1"/>
</dbReference>
<dbReference type="PROSITE" id="PS50065">
    <property type="entry name" value="HMG_COA_REDUCTASE_4"/>
    <property type="match status" value="1"/>
</dbReference>
<sequence length="593" mass="63278">MDVRRRSINSIHQIPSVGGTAPPMLKPKQPTKVDAVDLPDSPKASDALPLPLYITNGVFFTLFFTVVYYLLVRWREKIRNSTPLHVVTLSEIAAIFTFVASFIYLLGFFGIGLVQPFTSRSSHDDVWGVDDDEDVDEIVLKEDTRTVPCAAAPVDCPLPPIKPKVVDPVPISPPSSEEDEEIIKSVVEGTTPSYALESKLGDSHRAAAIRREALQRMTKKSLAGLPLDGFDYDSILGQCCEMPVGYVQIPVGIAGPLLLDGREYSVPMATTEGCLVASTNRGCKAIFACGGATSVLLRDAMTRAPVVRFGSAKRAADLKFFLENPLNFETLAAVFNSSSRFGKLQNIKCAIAGKNLYMRYSCSTGDAMGMNMISKGVQNVLDFLQDDFPDMDVIGISGNYCSDKKPAAVNWIEGRGKSVVCEAVIKEEVVKKVLKTNVASLVELNMLKNLTGSAMAGALGGFNAHASNIVSAVYLATGQDPAQNVESSHCITMMEAINDGKDLHVSVTMPSIEVGTVGGGTQLASQSACLNLLGVKGASKEAPGSNARLLATIVAGSVLAGELSLMSAIAAGQLVNSHMKYNRSNKDVTKASS</sequence>
<feature type="chain" id="PRO_0000114435" description="3-hydroxy-3-methylglutaryl-coenzyme A reductase">
    <location>
        <begin position="1"/>
        <end position="593"/>
    </location>
</feature>
<feature type="transmembrane region" description="Helical" evidence="2">
    <location>
        <begin position="52"/>
        <end position="72"/>
    </location>
</feature>
<feature type="transmembrane region" description="Helical" evidence="2">
    <location>
        <begin position="94"/>
        <end position="114"/>
    </location>
</feature>
<feature type="region of interest" description="Disordered" evidence="4">
    <location>
        <begin position="1"/>
        <end position="36"/>
    </location>
</feature>
<feature type="region of interest" description="Linker" evidence="1">
    <location>
        <begin position="115"/>
        <end position="177"/>
    </location>
</feature>
<feature type="region of interest" description="Catalytic" evidence="1">
    <location>
        <begin position="178"/>
        <end position="593"/>
    </location>
</feature>
<feature type="active site" description="Charge relay system" evidence="1">
    <location>
        <position position="272"/>
    </location>
</feature>
<feature type="active site" description="Charge relay system" evidence="1">
    <location>
        <position position="404"/>
    </location>
</feature>
<feature type="active site" description="Charge relay system" evidence="1">
    <location>
        <position position="480"/>
    </location>
</feature>
<feature type="active site" description="Proton donor" evidence="3">
    <location>
        <position position="578"/>
    </location>
</feature>
<feature type="glycosylation site" description="N-linked (GlcNAc...) asparagine" evidence="2">
    <location>
        <position position="336"/>
    </location>
</feature>
<feature type="glycosylation site" description="N-linked (GlcNAc...) asparagine" evidence="2">
    <location>
        <position position="449"/>
    </location>
</feature>
<feature type="glycosylation site" description="N-linked (GlcNAc...) asparagine" evidence="2">
    <location>
        <position position="582"/>
    </location>
</feature>
<keyword id="KW-0256">Endoplasmic reticulum</keyword>
<keyword id="KW-0325">Glycoprotein</keyword>
<keyword id="KW-0414">Isoprene biosynthesis</keyword>
<keyword id="KW-0472">Membrane</keyword>
<keyword id="KW-0521">NADP</keyword>
<keyword id="KW-0560">Oxidoreductase</keyword>
<keyword id="KW-0812">Transmembrane</keyword>
<keyword id="KW-1133">Transmembrane helix</keyword>
<organism>
    <name type="scientific">Camptotheca acuminata</name>
    <name type="common">Happy tree</name>
    <dbReference type="NCBI Taxonomy" id="16922"/>
    <lineage>
        <taxon>Eukaryota</taxon>
        <taxon>Viridiplantae</taxon>
        <taxon>Streptophyta</taxon>
        <taxon>Embryophyta</taxon>
        <taxon>Tracheophyta</taxon>
        <taxon>Spermatophyta</taxon>
        <taxon>Magnoliopsida</taxon>
        <taxon>eudicotyledons</taxon>
        <taxon>Gunneridae</taxon>
        <taxon>Pentapetalae</taxon>
        <taxon>asterids</taxon>
        <taxon>Cornales</taxon>
        <taxon>Nyssaceae</taxon>
        <taxon>Camptotheca</taxon>
    </lineage>
</organism>
<accession>P48021</accession>
<evidence type="ECO:0000250" key="1"/>
<evidence type="ECO:0000255" key="2"/>
<evidence type="ECO:0000255" key="3">
    <source>
        <dbReference type="PROSITE-ProRule" id="PRU10003"/>
    </source>
</evidence>
<evidence type="ECO:0000256" key="4">
    <source>
        <dbReference type="SAM" id="MobiDB-lite"/>
    </source>
</evidence>
<evidence type="ECO:0000305" key="5"/>
<name>HMDH_CAMAC</name>
<reference key="1">
    <citation type="journal article" date="1993" name="Plant Physiol.">
        <title>Expression of a 3-hydroxy-3-methylglutaryl coenzyme A reductase gene from Camptotheca acuminata is differentially regulated by wounding and methyl jasmonate.</title>
        <authorList>
            <person name="Burnett R.J."/>
            <person name="Maldonado-Mendoza I.E."/>
            <person name="McKnight T.D."/>
            <person name="Nessler C.L."/>
        </authorList>
    </citation>
    <scope>NUCLEOTIDE SEQUENCE [GENOMIC DNA]</scope>
</reference>
<proteinExistence type="inferred from homology"/>
<protein>
    <recommendedName>
        <fullName>3-hydroxy-3-methylglutaryl-coenzyme A reductase</fullName>
        <shortName>HMG-CoA reductase</shortName>
        <ecNumber>1.1.1.34</ecNumber>
    </recommendedName>
</protein>
<comment type="function">
    <text>Catalyzes the synthesis of mevalonate. The specific precursor of all isoprenoid compounds present in plants.</text>
</comment>
<comment type="catalytic activity">
    <reaction evidence="3">
        <text>(R)-mevalonate + 2 NADP(+) + CoA = (3S)-3-hydroxy-3-methylglutaryl-CoA + 2 NADPH + 2 H(+)</text>
        <dbReference type="Rhea" id="RHEA:15989"/>
        <dbReference type="ChEBI" id="CHEBI:15378"/>
        <dbReference type="ChEBI" id="CHEBI:36464"/>
        <dbReference type="ChEBI" id="CHEBI:43074"/>
        <dbReference type="ChEBI" id="CHEBI:57287"/>
        <dbReference type="ChEBI" id="CHEBI:57783"/>
        <dbReference type="ChEBI" id="CHEBI:58349"/>
        <dbReference type="EC" id="1.1.1.34"/>
    </reaction>
</comment>
<comment type="pathway">
    <text>Metabolic intermediate biosynthesis; (R)-mevalonate biosynthesis; (R)-mevalonate from acetyl-CoA: step 3/3.</text>
</comment>
<comment type="subcellular location">
    <subcellularLocation>
        <location>Endoplasmic reticulum membrane</location>
        <topology>Multi-pass membrane protein</topology>
    </subcellularLocation>
</comment>
<comment type="similarity">
    <text evidence="5">Belongs to the HMG-CoA reductase family.</text>
</comment>